<proteinExistence type="evidence at protein level"/>
<protein>
    <recommendedName>
        <fullName>Coilin</fullName>
    </recommendedName>
    <alternativeName>
        <fullName>p80-coilin</fullName>
    </alternativeName>
</protein>
<evidence type="ECO:0000250" key="1">
    <source>
        <dbReference type="UniProtKB" id="Q5SU73"/>
    </source>
</evidence>
<evidence type="ECO:0000256" key="2">
    <source>
        <dbReference type="SAM" id="MobiDB-lite"/>
    </source>
</evidence>
<evidence type="ECO:0000269" key="3">
    <source>
    </source>
</evidence>
<evidence type="ECO:0000269" key="4">
    <source>
    </source>
</evidence>
<evidence type="ECO:0000269" key="5">
    <source>
    </source>
</evidence>
<evidence type="ECO:0000269" key="6">
    <source>
    </source>
</evidence>
<evidence type="ECO:0000269" key="7">
    <source>
    </source>
</evidence>
<evidence type="ECO:0000269" key="8">
    <source>
    </source>
</evidence>
<evidence type="ECO:0000269" key="9">
    <source>
    </source>
</evidence>
<evidence type="ECO:0000269" key="10">
    <source>
    </source>
</evidence>
<evidence type="ECO:0000269" key="11">
    <source>
    </source>
</evidence>
<evidence type="ECO:0000269" key="12">
    <source>
    </source>
</evidence>
<evidence type="ECO:0000269" key="13">
    <source>
    </source>
</evidence>
<evidence type="ECO:0000269" key="14">
    <source>
    </source>
</evidence>
<evidence type="ECO:0000305" key="15"/>
<evidence type="ECO:0007744" key="16">
    <source>
    </source>
</evidence>
<evidence type="ECO:0007744" key="17">
    <source>
    </source>
</evidence>
<evidence type="ECO:0007744" key="18">
    <source>
    </source>
</evidence>
<evidence type="ECO:0007744" key="19">
    <source>
    </source>
</evidence>
<evidence type="ECO:0007744" key="20">
    <source>
    </source>
</evidence>
<evidence type="ECO:0007744" key="21">
    <source>
    </source>
</evidence>
<evidence type="ECO:0007744" key="22">
    <source>
    </source>
</evidence>
<evidence type="ECO:0007744" key="23">
    <source>
    </source>
</evidence>
<evidence type="ECO:0007744" key="24">
    <source>
    </source>
</evidence>
<name>COIL_HUMAN</name>
<dbReference type="EMBL" id="M58411">
    <property type="protein sequence ID" value="AAA36412.1"/>
    <property type="molecule type" value="mRNA"/>
</dbReference>
<dbReference type="EMBL" id="AK313616">
    <property type="protein sequence ID" value="BAG36378.1"/>
    <property type="molecule type" value="mRNA"/>
</dbReference>
<dbReference type="EMBL" id="AC004584">
    <property type="status" value="NOT_ANNOTATED_CDS"/>
    <property type="molecule type" value="Genomic_DNA"/>
</dbReference>
<dbReference type="EMBL" id="CH471109">
    <property type="protein sequence ID" value="EAW94522.1"/>
    <property type="molecule type" value="Genomic_DNA"/>
</dbReference>
<dbReference type="EMBL" id="BC010385">
    <property type="protein sequence ID" value="AAH10385.1"/>
    <property type="molecule type" value="mRNA"/>
</dbReference>
<dbReference type="EMBL" id="U06632">
    <property type="protein sequence ID" value="AAB81550.1"/>
    <property type="molecule type" value="mRNA"/>
</dbReference>
<dbReference type="CCDS" id="CCDS11592.1"/>
<dbReference type="PIR" id="S50113">
    <property type="entry name" value="S50113"/>
</dbReference>
<dbReference type="RefSeq" id="NP_004636.1">
    <property type="nucleotide sequence ID" value="NM_004645.3"/>
</dbReference>
<dbReference type="BMRB" id="P38432"/>
<dbReference type="BioGRID" id="113815">
    <property type="interactions" value="579"/>
</dbReference>
<dbReference type="CORUM" id="P38432"/>
<dbReference type="DIP" id="DIP-38503N"/>
<dbReference type="FunCoup" id="P38432">
    <property type="interactions" value="3563"/>
</dbReference>
<dbReference type="IntAct" id="P38432">
    <property type="interactions" value="147"/>
</dbReference>
<dbReference type="MINT" id="P38432"/>
<dbReference type="STRING" id="9606.ENSP00000240316"/>
<dbReference type="GlyGen" id="P38432">
    <property type="glycosylation" value="1 site, 1 O-linked glycan (1 site)"/>
</dbReference>
<dbReference type="iPTMnet" id="P38432"/>
<dbReference type="PhosphoSitePlus" id="P38432"/>
<dbReference type="SwissPalm" id="P38432"/>
<dbReference type="BioMuta" id="COIL"/>
<dbReference type="DMDM" id="585632"/>
<dbReference type="jPOST" id="P38432"/>
<dbReference type="MassIVE" id="P38432"/>
<dbReference type="PaxDb" id="9606-ENSP00000240316"/>
<dbReference type="PeptideAtlas" id="P38432"/>
<dbReference type="ProteomicsDB" id="55295"/>
<dbReference type="Pumba" id="P38432"/>
<dbReference type="Antibodypedia" id="4307">
    <property type="antibodies" value="338 antibodies from 37 providers"/>
</dbReference>
<dbReference type="DNASU" id="8161"/>
<dbReference type="Ensembl" id="ENST00000240316.5">
    <property type="protein sequence ID" value="ENSP00000240316.4"/>
    <property type="gene ID" value="ENSG00000121058.5"/>
</dbReference>
<dbReference type="GeneID" id="8161"/>
<dbReference type="KEGG" id="hsa:8161"/>
<dbReference type="MANE-Select" id="ENST00000240316.5">
    <property type="protein sequence ID" value="ENSP00000240316.4"/>
    <property type="RefSeq nucleotide sequence ID" value="NM_004645.3"/>
    <property type="RefSeq protein sequence ID" value="NP_004636.1"/>
</dbReference>
<dbReference type="UCSC" id="uc002iuu.4">
    <property type="organism name" value="human"/>
</dbReference>
<dbReference type="AGR" id="HGNC:2184"/>
<dbReference type="CTD" id="8161"/>
<dbReference type="DisGeNET" id="8161"/>
<dbReference type="GeneCards" id="COIL"/>
<dbReference type="HGNC" id="HGNC:2184">
    <property type="gene designation" value="COIL"/>
</dbReference>
<dbReference type="HPA" id="ENSG00000121058">
    <property type="expression patterns" value="Tissue enriched (testis)"/>
</dbReference>
<dbReference type="MIM" id="600272">
    <property type="type" value="gene"/>
</dbReference>
<dbReference type="neXtProt" id="NX_P38432"/>
<dbReference type="OpenTargets" id="ENSG00000121058"/>
<dbReference type="PharmGKB" id="PA26700"/>
<dbReference type="VEuPathDB" id="HostDB:ENSG00000121058"/>
<dbReference type="eggNOG" id="ENOG502QVWV">
    <property type="taxonomic scope" value="Eukaryota"/>
</dbReference>
<dbReference type="GeneTree" id="ENSGT00390000004832"/>
<dbReference type="HOGENOM" id="CLU_034553_0_0_1"/>
<dbReference type="InParanoid" id="P38432"/>
<dbReference type="OMA" id="CEYKKQT"/>
<dbReference type="OrthoDB" id="74813at2759"/>
<dbReference type="PAN-GO" id="P38432">
    <property type="GO annotations" value="4 GO annotations based on evolutionary models"/>
</dbReference>
<dbReference type="PhylomeDB" id="P38432"/>
<dbReference type="TreeFam" id="TF331811"/>
<dbReference type="PathwayCommons" id="P38432"/>
<dbReference type="SignaLink" id="P38432"/>
<dbReference type="SIGNOR" id="P38432"/>
<dbReference type="BioGRID-ORCS" id="8161">
    <property type="hits" value="111 hits in 1155 CRISPR screens"/>
</dbReference>
<dbReference type="CD-CODE" id="6F24707C">
    <property type="entry name" value="Cajal body"/>
</dbReference>
<dbReference type="CD-CODE" id="91857CE7">
    <property type="entry name" value="Nucleolus"/>
</dbReference>
<dbReference type="CD-CODE" id="DEE660B4">
    <property type="entry name" value="Stress granule"/>
</dbReference>
<dbReference type="ChiTaRS" id="COIL">
    <property type="organism name" value="human"/>
</dbReference>
<dbReference type="GeneWiki" id="Coilin"/>
<dbReference type="GenomeRNAi" id="8161"/>
<dbReference type="Pharos" id="P38432">
    <property type="development level" value="Tbio"/>
</dbReference>
<dbReference type="PRO" id="PR:P38432"/>
<dbReference type="Proteomes" id="UP000005640">
    <property type="component" value="Chromosome 17"/>
</dbReference>
<dbReference type="RNAct" id="P38432">
    <property type="molecule type" value="protein"/>
</dbReference>
<dbReference type="Bgee" id="ENSG00000121058">
    <property type="expression patterns" value="Expressed in sperm and 208 other cell types or tissues"/>
</dbReference>
<dbReference type="ExpressionAtlas" id="P38432">
    <property type="expression patterns" value="baseline and differential"/>
</dbReference>
<dbReference type="GO" id="GO:0015030">
    <property type="term" value="C:Cajal body"/>
    <property type="evidence" value="ECO:0000314"/>
    <property type="project" value="UniProtKB"/>
</dbReference>
<dbReference type="GO" id="GO:0001650">
    <property type="term" value="C:fibrillar center"/>
    <property type="evidence" value="ECO:0000314"/>
    <property type="project" value="HPA"/>
</dbReference>
<dbReference type="GO" id="GO:0016020">
    <property type="term" value="C:membrane"/>
    <property type="evidence" value="ECO:0007005"/>
    <property type="project" value="UniProtKB"/>
</dbReference>
<dbReference type="GO" id="GO:0016604">
    <property type="term" value="C:nuclear body"/>
    <property type="evidence" value="ECO:0000314"/>
    <property type="project" value="HPA"/>
</dbReference>
<dbReference type="GO" id="GO:0005730">
    <property type="term" value="C:nucleolus"/>
    <property type="evidence" value="ECO:0000314"/>
    <property type="project" value="UniProtKB"/>
</dbReference>
<dbReference type="GO" id="GO:0005654">
    <property type="term" value="C:nucleoplasm"/>
    <property type="evidence" value="ECO:0000314"/>
    <property type="project" value="UniProtKB"/>
</dbReference>
<dbReference type="GO" id="GO:0005634">
    <property type="term" value="C:nucleus"/>
    <property type="evidence" value="ECO:0000314"/>
    <property type="project" value="UniProtKB"/>
</dbReference>
<dbReference type="GO" id="GO:0042802">
    <property type="term" value="F:identical protein binding"/>
    <property type="evidence" value="ECO:0000353"/>
    <property type="project" value="IntAct"/>
</dbReference>
<dbReference type="GO" id="GO:0030619">
    <property type="term" value="F:U1 snRNA binding"/>
    <property type="evidence" value="ECO:0000318"/>
    <property type="project" value="GO_Central"/>
</dbReference>
<dbReference type="GO" id="GO:0030620">
    <property type="term" value="F:U2 snRNA binding"/>
    <property type="evidence" value="ECO:0000318"/>
    <property type="project" value="GO_Central"/>
</dbReference>
<dbReference type="GO" id="GO:0000387">
    <property type="term" value="P:spliceosomal snRNP assembly"/>
    <property type="evidence" value="ECO:0000318"/>
    <property type="project" value="GO_Central"/>
</dbReference>
<dbReference type="InterPro" id="IPR024822">
    <property type="entry name" value="Coilin"/>
</dbReference>
<dbReference type="InterPro" id="IPR031722">
    <property type="entry name" value="Coilin_N"/>
</dbReference>
<dbReference type="InterPro" id="IPR056398">
    <property type="entry name" value="Tudor_Coilin"/>
</dbReference>
<dbReference type="PANTHER" id="PTHR15197:SF0">
    <property type="entry name" value="COILIN"/>
    <property type="match status" value="1"/>
</dbReference>
<dbReference type="PANTHER" id="PTHR15197">
    <property type="entry name" value="COILIN P80"/>
    <property type="match status" value="1"/>
</dbReference>
<dbReference type="Pfam" id="PF15862">
    <property type="entry name" value="Coilin_N"/>
    <property type="match status" value="1"/>
</dbReference>
<dbReference type="Pfam" id="PF23086">
    <property type="entry name" value="Tudor_Coilin"/>
    <property type="match status" value="1"/>
</dbReference>
<reference key="1">
    <citation type="journal article" date="1994" name="Nucleic Acids Res.">
        <title>Structure, expression and chromosomal localization of human p80-coilin gene.</title>
        <authorList>
            <person name="Chan E.K.L."/>
            <person name="Takano S."/>
            <person name="Andrade L.E.C."/>
            <person name="Hamel J.C."/>
            <person name="Matera A.G."/>
        </authorList>
    </citation>
    <scope>NUCLEOTIDE SEQUENCE [MRNA]</scope>
    <source>
        <tissue>Liver</tissue>
    </source>
</reference>
<reference key="2">
    <citation type="journal article" date="2004" name="Nat. Genet.">
        <title>Complete sequencing and characterization of 21,243 full-length human cDNAs.</title>
        <authorList>
            <person name="Ota T."/>
            <person name="Suzuki Y."/>
            <person name="Nishikawa T."/>
            <person name="Otsuki T."/>
            <person name="Sugiyama T."/>
            <person name="Irie R."/>
            <person name="Wakamatsu A."/>
            <person name="Hayashi K."/>
            <person name="Sato H."/>
            <person name="Nagai K."/>
            <person name="Kimura K."/>
            <person name="Makita H."/>
            <person name="Sekine M."/>
            <person name="Obayashi M."/>
            <person name="Nishi T."/>
            <person name="Shibahara T."/>
            <person name="Tanaka T."/>
            <person name="Ishii S."/>
            <person name="Yamamoto J."/>
            <person name="Saito K."/>
            <person name="Kawai Y."/>
            <person name="Isono Y."/>
            <person name="Nakamura Y."/>
            <person name="Nagahari K."/>
            <person name="Murakami K."/>
            <person name="Yasuda T."/>
            <person name="Iwayanagi T."/>
            <person name="Wagatsuma M."/>
            <person name="Shiratori A."/>
            <person name="Sudo H."/>
            <person name="Hosoiri T."/>
            <person name="Kaku Y."/>
            <person name="Kodaira H."/>
            <person name="Kondo H."/>
            <person name="Sugawara M."/>
            <person name="Takahashi M."/>
            <person name="Kanda K."/>
            <person name="Yokoi T."/>
            <person name="Furuya T."/>
            <person name="Kikkawa E."/>
            <person name="Omura Y."/>
            <person name="Abe K."/>
            <person name="Kamihara K."/>
            <person name="Katsuta N."/>
            <person name="Sato K."/>
            <person name="Tanikawa M."/>
            <person name="Yamazaki M."/>
            <person name="Ninomiya K."/>
            <person name="Ishibashi T."/>
            <person name="Yamashita H."/>
            <person name="Murakawa K."/>
            <person name="Fujimori K."/>
            <person name="Tanai H."/>
            <person name="Kimata M."/>
            <person name="Watanabe M."/>
            <person name="Hiraoka S."/>
            <person name="Chiba Y."/>
            <person name="Ishida S."/>
            <person name="Ono Y."/>
            <person name="Takiguchi S."/>
            <person name="Watanabe S."/>
            <person name="Yosida M."/>
            <person name="Hotuta T."/>
            <person name="Kusano J."/>
            <person name="Kanehori K."/>
            <person name="Takahashi-Fujii A."/>
            <person name="Hara H."/>
            <person name="Tanase T.-O."/>
            <person name="Nomura Y."/>
            <person name="Togiya S."/>
            <person name="Komai F."/>
            <person name="Hara R."/>
            <person name="Takeuchi K."/>
            <person name="Arita M."/>
            <person name="Imose N."/>
            <person name="Musashino K."/>
            <person name="Yuuki H."/>
            <person name="Oshima A."/>
            <person name="Sasaki N."/>
            <person name="Aotsuka S."/>
            <person name="Yoshikawa Y."/>
            <person name="Matsunawa H."/>
            <person name="Ichihara T."/>
            <person name="Shiohata N."/>
            <person name="Sano S."/>
            <person name="Moriya S."/>
            <person name="Momiyama H."/>
            <person name="Satoh N."/>
            <person name="Takami S."/>
            <person name="Terashima Y."/>
            <person name="Suzuki O."/>
            <person name="Nakagawa S."/>
            <person name="Senoh A."/>
            <person name="Mizoguchi H."/>
            <person name="Goto Y."/>
            <person name="Shimizu F."/>
            <person name="Wakebe H."/>
            <person name="Hishigaki H."/>
            <person name="Watanabe T."/>
            <person name="Sugiyama A."/>
            <person name="Takemoto M."/>
            <person name="Kawakami B."/>
            <person name="Yamazaki M."/>
            <person name="Watanabe K."/>
            <person name="Kumagai A."/>
            <person name="Itakura S."/>
            <person name="Fukuzumi Y."/>
            <person name="Fujimori Y."/>
            <person name="Komiyama M."/>
            <person name="Tashiro H."/>
            <person name="Tanigami A."/>
            <person name="Fujiwara T."/>
            <person name="Ono T."/>
            <person name="Yamada K."/>
            <person name="Fujii Y."/>
            <person name="Ozaki K."/>
            <person name="Hirao M."/>
            <person name="Ohmori Y."/>
            <person name="Kawabata A."/>
            <person name="Hikiji T."/>
            <person name="Kobatake N."/>
            <person name="Inagaki H."/>
            <person name="Ikema Y."/>
            <person name="Okamoto S."/>
            <person name="Okitani R."/>
            <person name="Kawakami T."/>
            <person name="Noguchi S."/>
            <person name="Itoh T."/>
            <person name="Shigeta K."/>
            <person name="Senba T."/>
            <person name="Matsumura K."/>
            <person name="Nakajima Y."/>
            <person name="Mizuno T."/>
            <person name="Morinaga M."/>
            <person name="Sasaki M."/>
            <person name="Togashi T."/>
            <person name="Oyama M."/>
            <person name="Hata H."/>
            <person name="Watanabe M."/>
            <person name="Komatsu T."/>
            <person name="Mizushima-Sugano J."/>
            <person name="Satoh T."/>
            <person name="Shirai Y."/>
            <person name="Takahashi Y."/>
            <person name="Nakagawa K."/>
            <person name="Okumura K."/>
            <person name="Nagase T."/>
            <person name="Nomura N."/>
            <person name="Kikuchi H."/>
            <person name="Masuho Y."/>
            <person name="Yamashita R."/>
            <person name="Nakai K."/>
            <person name="Yada T."/>
            <person name="Nakamura Y."/>
            <person name="Ohara O."/>
            <person name="Isogai T."/>
            <person name="Sugano S."/>
        </authorList>
    </citation>
    <scope>NUCLEOTIDE SEQUENCE [LARGE SCALE MRNA]</scope>
    <source>
        <tissue>Thymus</tissue>
    </source>
</reference>
<reference key="3">
    <citation type="journal article" date="2006" name="Nature">
        <title>DNA sequence of human chromosome 17 and analysis of rearrangement in the human lineage.</title>
        <authorList>
            <person name="Zody M.C."/>
            <person name="Garber M."/>
            <person name="Adams D.J."/>
            <person name="Sharpe T."/>
            <person name="Harrow J."/>
            <person name="Lupski J.R."/>
            <person name="Nicholson C."/>
            <person name="Searle S.M."/>
            <person name="Wilming L."/>
            <person name="Young S.K."/>
            <person name="Abouelleil A."/>
            <person name="Allen N.R."/>
            <person name="Bi W."/>
            <person name="Bloom T."/>
            <person name="Borowsky M.L."/>
            <person name="Bugalter B.E."/>
            <person name="Butler J."/>
            <person name="Chang J.L."/>
            <person name="Chen C.-K."/>
            <person name="Cook A."/>
            <person name="Corum B."/>
            <person name="Cuomo C.A."/>
            <person name="de Jong P.J."/>
            <person name="DeCaprio D."/>
            <person name="Dewar K."/>
            <person name="FitzGerald M."/>
            <person name="Gilbert J."/>
            <person name="Gibson R."/>
            <person name="Gnerre S."/>
            <person name="Goldstein S."/>
            <person name="Grafham D.V."/>
            <person name="Grocock R."/>
            <person name="Hafez N."/>
            <person name="Hagopian D.S."/>
            <person name="Hart E."/>
            <person name="Norman C.H."/>
            <person name="Humphray S."/>
            <person name="Jaffe D.B."/>
            <person name="Jones M."/>
            <person name="Kamal M."/>
            <person name="Khodiyar V.K."/>
            <person name="LaButti K."/>
            <person name="Laird G."/>
            <person name="Lehoczky J."/>
            <person name="Liu X."/>
            <person name="Lokyitsang T."/>
            <person name="Loveland J."/>
            <person name="Lui A."/>
            <person name="Macdonald P."/>
            <person name="Major J.E."/>
            <person name="Matthews L."/>
            <person name="Mauceli E."/>
            <person name="McCarroll S.A."/>
            <person name="Mihalev A.H."/>
            <person name="Mudge J."/>
            <person name="Nguyen C."/>
            <person name="Nicol R."/>
            <person name="O'Leary S.B."/>
            <person name="Osoegawa K."/>
            <person name="Schwartz D.C."/>
            <person name="Shaw-Smith C."/>
            <person name="Stankiewicz P."/>
            <person name="Steward C."/>
            <person name="Swarbreck D."/>
            <person name="Venkataraman V."/>
            <person name="Whittaker C.A."/>
            <person name="Yang X."/>
            <person name="Zimmer A.R."/>
            <person name="Bradley A."/>
            <person name="Hubbard T."/>
            <person name="Birren B.W."/>
            <person name="Rogers J."/>
            <person name="Lander E.S."/>
            <person name="Nusbaum C."/>
        </authorList>
    </citation>
    <scope>NUCLEOTIDE SEQUENCE [LARGE SCALE GENOMIC DNA]</scope>
</reference>
<reference key="4">
    <citation type="submission" date="2005-09" db="EMBL/GenBank/DDBJ databases">
        <authorList>
            <person name="Mural R.J."/>
            <person name="Istrail S."/>
            <person name="Sutton G.G."/>
            <person name="Florea L."/>
            <person name="Halpern A.L."/>
            <person name="Mobarry C.M."/>
            <person name="Lippert R."/>
            <person name="Walenz B."/>
            <person name="Shatkay H."/>
            <person name="Dew I."/>
            <person name="Miller J.R."/>
            <person name="Flanigan M.J."/>
            <person name="Edwards N.J."/>
            <person name="Bolanos R."/>
            <person name="Fasulo D."/>
            <person name="Halldorsson B.V."/>
            <person name="Hannenhalli S."/>
            <person name="Turner R."/>
            <person name="Yooseph S."/>
            <person name="Lu F."/>
            <person name="Nusskern D.R."/>
            <person name="Shue B.C."/>
            <person name="Zheng X.H."/>
            <person name="Zhong F."/>
            <person name="Delcher A.L."/>
            <person name="Huson D.H."/>
            <person name="Kravitz S.A."/>
            <person name="Mouchard L."/>
            <person name="Reinert K."/>
            <person name="Remington K.A."/>
            <person name="Clark A.G."/>
            <person name="Waterman M.S."/>
            <person name="Eichler E.E."/>
            <person name="Adams M.D."/>
            <person name="Hunkapiller M.W."/>
            <person name="Myers E.W."/>
            <person name="Venter J.C."/>
        </authorList>
    </citation>
    <scope>NUCLEOTIDE SEQUENCE [LARGE SCALE GENOMIC DNA]</scope>
</reference>
<reference key="5">
    <citation type="journal article" date="2004" name="Genome Res.">
        <title>The status, quality, and expansion of the NIH full-length cDNA project: the Mammalian Gene Collection (MGC).</title>
        <authorList>
            <consortium name="The MGC Project Team"/>
        </authorList>
    </citation>
    <scope>NUCLEOTIDE SEQUENCE [LARGE SCALE MRNA]</scope>
    <source>
        <tissue>Brain</tissue>
    </source>
</reference>
<reference key="6">
    <citation type="journal article" date="1991" name="J. Exp. Med.">
        <title>Human autoantibody to a novel protein of the nuclear coiled body: immunological characterization and cDNA cloning of p80-coilin.</title>
        <authorList>
            <person name="Andrade L.E.C."/>
            <person name="Chan E.K.L."/>
            <person name="Raska I."/>
            <person name="Peebles C.L."/>
            <person name="Roos G."/>
            <person name="Tan E.M."/>
        </authorList>
    </citation>
    <scope>NUCLEOTIDE SEQUENCE [MRNA] OF 172-576</scope>
    <source>
        <tissue>Liver</tissue>
    </source>
</reference>
<reference key="7">
    <citation type="journal article" date="1993" name="J. Cell Biol.">
        <title>Assembly of snRNP-containing coiled bodies is regulated in interphase and mitosis -- evidence that the coiled body is a kinetic nuclear structure.</title>
        <authorList>
            <person name="Carmo-Fonseca M."/>
            <person name="Ferreira J."/>
            <person name="Lamond A.I."/>
        </authorList>
    </citation>
    <scope>FUNCTION</scope>
    <scope>SUBCELLULAR LOCATION</scope>
    <scope>PHOSPHORYLATION</scope>
</reference>
<reference key="8">
    <citation type="journal article" date="2001" name="Genes Dev.">
        <title>Coilin forms the bridge between Cajal bodies and SMN, the spinal muscular atrophy protein.</title>
        <authorList>
            <person name="Hebert M.D."/>
            <person name="Szymczyk P.W."/>
            <person name="Shpargel K.B."/>
            <person name="Matera A.G."/>
        </authorList>
    </citation>
    <scope>INTERACTION WITH SMN</scope>
    <scope>MUTAGENESIS OF 413-ARG--ARG-419</scope>
</reference>
<reference key="9">
    <citation type="journal article" date="2002" name="Dev. Cell">
        <title>Coilin methylation regulates nuclear body formation.</title>
        <authorList>
            <person name="Hebert M.D."/>
            <person name="Shpargel K.B."/>
            <person name="Ospina J.K."/>
            <person name="Tucker K.E."/>
            <person name="Matera A.G."/>
        </authorList>
    </citation>
    <scope>METHYLATION OF RG REPEATS</scope>
</reference>
<reference key="10">
    <citation type="journal article" date="2005" name="BMC Cell Biol.">
        <title>A novel EB-1/AIDA-1 isoform, AIDA-1c, interacts with the Cajal body protein coilin.</title>
        <authorList>
            <person name="Xu H."/>
            <person name="Hebert M.D."/>
        </authorList>
    </citation>
    <scope>INTERACTION WITH ANKS1B</scope>
</reference>
<reference key="11">
    <citation type="journal article" date="2005" name="J. Biol. Chem.">
        <title>Characterization of hCINAP, a novel coilin-interacting protein encoded by a transcript from the transcription factor TAFIID32 locus.</title>
        <authorList>
            <person name="Santama N."/>
            <person name="Ogg S.C."/>
            <person name="Malekkou A."/>
            <person name="Zographos S.E."/>
            <person name="Weis K."/>
            <person name="Lamond A.I."/>
        </authorList>
    </citation>
    <scope>INTERACTION WITH AK6</scope>
</reference>
<reference key="12">
    <citation type="journal article" date="2006" name="Cell">
        <title>Global, in vivo, and site-specific phosphorylation dynamics in signaling networks.</title>
        <authorList>
            <person name="Olsen J.V."/>
            <person name="Blagoev B."/>
            <person name="Gnad F."/>
            <person name="Macek B."/>
            <person name="Kumar C."/>
            <person name="Mortensen P."/>
            <person name="Mann M."/>
        </authorList>
    </citation>
    <scope>PHOSPHORYLATION [LARGE SCALE ANALYSIS] AT THR-122</scope>
    <scope>IDENTIFICATION BY MASS SPECTROMETRY [LARGE SCALE ANALYSIS]</scope>
    <source>
        <tissue>Cervix carcinoma</tissue>
    </source>
</reference>
<reference key="13">
    <citation type="journal article" date="2006" name="Nat. Biotechnol.">
        <title>A probability-based approach for high-throughput protein phosphorylation analysis and site localization.</title>
        <authorList>
            <person name="Beausoleil S.A."/>
            <person name="Villen J."/>
            <person name="Gerber S.A."/>
            <person name="Rush J."/>
            <person name="Gygi S.P."/>
        </authorList>
    </citation>
    <scope>PHOSPHORYLATION [LARGE SCALE ANALYSIS] AT THR-122 AND SER-489</scope>
    <scope>IDENTIFICATION BY MASS SPECTROMETRY [LARGE SCALE ANALYSIS]</scope>
    <source>
        <tissue>Cervix carcinoma</tissue>
    </source>
</reference>
<reference key="14">
    <citation type="journal article" date="2008" name="Proc. Natl. Acad. Sci. U.S.A.">
        <title>A quantitative atlas of mitotic phosphorylation.</title>
        <authorList>
            <person name="Dephoure N."/>
            <person name="Zhou C."/>
            <person name="Villen J."/>
            <person name="Beausoleil S.A."/>
            <person name="Bakalarski C.E."/>
            <person name="Elledge S.J."/>
            <person name="Gygi S.P."/>
        </authorList>
    </citation>
    <scope>PHOSPHORYLATION [LARGE SCALE ANALYSIS] AT SER-271; THR-290; SER-301; THR-303 AND SER-489</scope>
    <scope>IDENTIFICATION BY MASS SPECTROMETRY [LARGE SCALE ANALYSIS]</scope>
    <source>
        <tissue>Cervix carcinoma</tissue>
    </source>
</reference>
<reference key="15">
    <citation type="journal article" date="2009" name="Anal. Chem.">
        <title>Lys-N and trypsin cover complementary parts of the phosphoproteome in a refined SCX-based approach.</title>
        <authorList>
            <person name="Gauci S."/>
            <person name="Helbig A.O."/>
            <person name="Slijper M."/>
            <person name="Krijgsveld J."/>
            <person name="Heck A.J."/>
            <person name="Mohammed S."/>
        </authorList>
    </citation>
    <scope>IDENTIFICATION BY MASS SPECTROMETRY [LARGE SCALE ANALYSIS]</scope>
</reference>
<reference key="16">
    <citation type="journal article" date="2009" name="Sci. Signal.">
        <title>Quantitative phosphoproteomic analysis of T cell receptor signaling reveals system-wide modulation of protein-protein interactions.</title>
        <authorList>
            <person name="Mayya V."/>
            <person name="Lundgren D.H."/>
            <person name="Hwang S.-I."/>
            <person name="Rezaul K."/>
            <person name="Wu L."/>
            <person name="Eng J.K."/>
            <person name="Rodionov V."/>
            <person name="Han D.K."/>
        </authorList>
    </citation>
    <scope>IDENTIFICATION BY MASS SPECTROMETRY [LARGE SCALE ANALYSIS]</scope>
    <source>
        <tissue>Leukemic T-cell</tissue>
    </source>
</reference>
<reference key="17">
    <citation type="journal article" date="2010" name="PLoS Biol.">
        <title>WRAP53 is essential for Cajal body formation and for targeting the survival of motor neuron complex to Cajal bodies.</title>
        <authorList>
            <person name="Mahmoudi S."/>
            <person name="Henriksson S."/>
            <person name="Weibrecht I."/>
            <person name="Smith S."/>
            <person name="Soederberg O."/>
            <person name="Stroemblad S."/>
            <person name="Wiman K.G."/>
            <person name="Farnebo M."/>
        </authorList>
    </citation>
    <scope>SUBCELLULAR LOCATION</scope>
    <scope>INTERACTION WITH WRAP53</scope>
</reference>
<reference key="18">
    <citation type="journal article" date="2010" name="Sci. Signal.">
        <title>Quantitative phosphoproteomics reveals widespread full phosphorylation site occupancy during mitosis.</title>
        <authorList>
            <person name="Olsen J.V."/>
            <person name="Vermeulen M."/>
            <person name="Santamaria A."/>
            <person name="Kumar C."/>
            <person name="Miller M.L."/>
            <person name="Jensen L.J."/>
            <person name="Gnad F."/>
            <person name="Cox J."/>
            <person name="Jensen T.S."/>
            <person name="Nigg E.A."/>
            <person name="Brunak S."/>
            <person name="Mann M."/>
        </authorList>
    </citation>
    <scope>PHOSPHORYLATION [LARGE SCALE ANALYSIS] AT SER-105; THR-122; SER-271; SER-272; THR-456; SER-489 AND SER-566</scope>
    <scope>IDENTIFICATION BY MASS SPECTROMETRY [LARGE SCALE ANALYSIS]</scope>
    <source>
        <tissue>Cervix carcinoma</tissue>
    </source>
</reference>
<reference key="19">
    <citation type="journal article" date="2011" name="BMC Syst. Biol.">
        <title>Initial characterization of the human central proteome.</title>
        <authorList>
            <person name="Burkard T.R."/>
            <person name="Planyavsky M."/>
            <person name="Kaupe I."/>
            <person name="Breitwieser F.P."/>
            <person name="Buerckstuemmer T."/>
            <person name="Bennett K.L."/>
            <person name="Superti-Furga G."/>
            <person name="Colinge J."/>
        </authorList>
    </citation>
    <scope>IDENTIFICATION BY MASS SPECTROMETRY [LARGE SCALE ANALYSIS]</scope>
</reference>
<reference key="20">
    <citation type="journal article" date="2011" name="J. Proteomics">
        <title>Substrate profiling of human vaccinia-related kinases identifies coilin, a Cajal body nuclear protein, as a phosphorylation target with neurological implications.</title>
        <authorList>
            <person name="Sanz-Garcia M."/>
            <person name="Vazquez-Cedeira M."/>
            <person name="Kellerman E."/>
            <person name="Renbaum P."/>
            <person name="Levy-Lahad E."/>
            <person name="Lazo P.A."/>
        </authorList>
    </citation>
    <scope>PHOSPHORYLATION AT SER-184 BY VRK1 AND VRK2</scope>
</reference>
<reference key="21">
    <citation type="journal article" date="2011" name="Sci. Signal.">
        <title>System-wide temporal characterization of the proteome and phosphoproteome of human embryonic stem cell differentiation.</title>
        <authorList>
            <person name="Rigbolt K.T."/>
            <person name="Prokhorova T.A."/>
            <person name="Akimov V."/>
            <person name="Henningsen J."/>
            <person name="Johansen P.T."/>
            <person name="Kratchmarova I."/>
            <person name="Kassem M."/>
            <person name="Mann M."/>
            <person name="Olsen J.V."/>
            <person name="Blagoev B."/>
        </authorList>
    </citation>
    <scope>PHOSPHORYLATION [LARGE SCALE ANALYSIS] AT THR-122; SER-271 AND SER-566</scope>
    <scope>IDENTIFICATION BY MASS SPECTROMETRY [LARGE SCALE ANALYSIS]</scope>
</reference>
<reference key="22">
    <citation type="journal article" date="2012" name="Mol. Cell. Biol.">
        <title>Telomerase recruitment requires both TCAB1 and Cajal bodies independently.</title>
        <authorList>
            <person name="Stern J.L."/>
            <person name="Zyner K.G."/>
            <person name="Pickett H.A."/>
            <person name="Cohen S.B."/>
            <person name="Bryan T.M."/>
        </authorList>
    </citation>
    <scope>SUBCELLULAR LOCATION</scope>
</reference>
<reference key="23">
    <citation type="journal article" date="2013" name="EMBO J.">
        <title>HOT1 is a mammalian direct telomere repeat-binding protein contributing to telomerase recruitment.</title>
        <authorList>
            <person name="Kappei D."/>
            <person name="Butter F."/>
            <person name="Benda C."/>
            <person name="Scheibe M."/>
            <person name="Draskovic I."/>
            <person name="Stevense M."/>
            <person name="Novo C.L."/>
            <person name="Basquin C."/>
            <person name="Araki M."/>
            <person name="Araki K."/>
            <person name="Krastev D.B."/>
            <person name="Kittler R."/>
            <person name="Jessberger R."/>
            <person name="Londono-Vallejo J.A."/>
            <person name="Mann M."/>
            <person name="Buchholz F."/>
        </authorList>
    </citation>
    <scope>INTERACTION WITH HMBOX1</scope>
</reference>
<reference key="24">
    <citation type="journal article" date="2013" name="Biochem. Biophys. Res. Commun.">
        <title>Human UBL5 protein interacts with coilin and meets the Cajal bodies.</title>
        <authorList>
            <person name="Sveda M."/>
            <person name="Castoralova M."/>
            <person name="Lipov J."/>
            <person name="Ruml T."/>
            <person name="Knejzlik Z."/>
        </authorList>
    </citation>
    <scope>SUBCELLULAR LOCATION</scope>
    <scope>INTERACTION WITH UBL5</scope>
</reference>
<reference key="25">
    <citation type="journal article" date="2013" name="J. Proteome Res.">
        <title>Toward a comprehensive characterization of a human cancer cell phosphoproteome.</title>
        <authorList>
            <person name="Zhou H."/>
            <person name="Di Palma S."/>
            <person name="Preisinger C."/>
            <person name="Peng M."/>
            <person name="Polat A.N."/>
            <person name="Heck A.J."/>
            <person name="Mohammed S."/>
        </authorList>
    </citation>
    <scope>PHOSPHORYLATION [LARGE SCALE ANALYSIS] AT THR-122; SER-271; SER-301; THR-303; SER-403; THR-456; SER-487; SER-489 AND SER-566</scope>
    <scope>IDENTIFICATION BY MASS SPECTROMETRY [LARGE SCALE ANALYSIS]</scope>
    <source>
        <tissue>Cervix carcinoma</tissue>
        <tissue>Erythroleukemia</tissue>
    </source>
</reference>
<reference key="26">
    <citation type="journal article" date="2014" name="J. Proteomics">
        <title>An enzyme assisted RP-RPLC approach for in-depth analysis of human liver phosphoproteome.</title>
        <authorList>
            <person name="Bian Y."/>
            <person name="Song C."/>
            <person name="Cheng K."/>
            <person name="Dong M."/>
            <person name="Wang F."/>
            <person name="Huang J."/>
            <person name="Sun D."/>
            <person name="Wang L."/>
            <person name="Ye M."/>
            <person name="Zou H."/>
        </authorList>
    </citation>
    <scope>PHOSPHORYLATION [LARGE SCALE ANALYSIS] AT THR-122</scope>
    <scope>IDENTIFICATION BY MASS SPECTROMETRY [LARGE SCALE ANALYSIS]</scope>
    <source>
        <tissue>Liver</tissue>
    </source>
</reference>
<reference key="27">
    <citation type="journal article" date="2015" name="Mol. Cell. Proteomics">
        <title>System-wide analysis of SUMOylation dynamics in response to replication stress reveals novel small ubiquitin-like modified target proteins and acceptor lysines relevant for genome stability.</title>
        <authorList>
            <person name="Xiao Z."/>
            <person name="Chang J.G."/>
            <person name="Hendriks I.A."/>
            <person name="Sigurdsson J.O."/>
            <person name="Olsen J.V."/>
            <person name="Vertegaal A.C."/>
        </authorList>
    </citation>
    <scope>SUMOYLATION [LARGE SCALE ANALYSIS] AT LYS-127; LYS-204 AND LYS-281</scope>
    <scope>IDENTIFICATION BY MASS SPECTROMETRY [LARGE SCALE ANALYSIS]</scope>
</reference>
<reference key="28">
    <citation type="journal article" date="2017" name="Nat. Struct. Mol. Biol.">
        <title>Site-specific mapping of the human SUMO proteome reveals co-modification with phosphorylation.</title>
        <authorList>
            <person name="Hendriks I.A."/>
            <person name="Lyon D."/>
            <person name="Young C."/>
            <person name="Jensen L.J."/>
            <person name="Vertegaal A.C."/>
            <person name="Nielsen M.L."/>
        </authorList>
    </citation>
    <scope>SUMOYLATION [LARGE SCALE ANALYSIS] AT LYS-127; LYS-151; LYS-160; LYS-204; LYS-209; LYS-274; LYS-281; LYS-293; LYS-297; LYS-444 AND LYS-496</scope>
    <scope>IDENTIFICATION BY MASS SPECTROMETRY [LARGE SCALE ANALYSIS]</scope>
</reference>
<reference key="29">
    <citation type="journal article" date="2018" name="Proc. Natl. Acad. Sci. U.S.A.">
        <title>PIP30/FAM192A is a novel regulator of the nuclear proteasome activator PA28gamma.</title>
        <authorList>
            <person name="Jonik-Nowak B."/>
            <person name="Menneteau T."/>
            <person name="Fesquet D."/>
            <person name="Baldin V."/>
            <person name="Bonne-Andrea C."/>
            <person name="Mechali F."/>
            <person name="Fabre B."/>
            <person name="Boisguerin P."/>
            <person name="de Rossi S."/>
            <person name="Henriquet C."/>
            <person name="Pugniere M."/>
            <person name="Ducoux-Petit M."/>
            <person name="Burlet-Schiltz O."/>
            <person name="Lamond A.I."/>
            <person name="Fort P."/>
            <person name="Boulon S."/>
            <person name="Bousquet M.P."/>
            <person name="Coux O."/>
        </authorList>
    </citation>
    <scope>INTERACTION WITH PSME3</scope>
</reference>
<reference key="30">
    <citation type="journal article" date="2019" name="Sci. Rep.">
        <title>VRK1 functional insufficiency due to alterations in protein stability or kinase activity of human VRK1 pathogenic variants implicated in neuromotor syndromes.</title>
        <authorList>
            <person name="Martin-Doncel E."/>
            <person name="Rojas A.M."/>
            <person name="Cantarero L."/>
            <person name="Lazo P.A."/>
        </authorList>
    </citation>
    <scope>PHOSPHORYLATION BY VRK1</scope>
</reference>
<reference key="31">
    <citation type="journal article" date="2010" name="FEBS Lett.">
        <title>Solution structure of the carboxy-terminal Tudor domain from human Coilin.</title>
        <authorList>
            <person name="Shanbhag R."/>
            <person name="Kurabi A."/>
            <person name="Kwan J.J."/>
            <person name="Donaldson L.W."/>
        </authorList>
    </citation>
    <scope>STRUCTURE BY NMR OF 460-576</scope>
    <scope>DOMAIN TUDOR</scope>
</reference>
<organism>
    <name type="scientific">Homo sapiens</name>
    <name type="common">Human</name>
    <dbReference type="NCBI Taxonomy" id="9606"/>
    <lineage>
        <taxon>Eukaryota</taxon>
        <taxon>Metazoa</taxon>
        <taxon>Chordata</taxon>
        <taxon>Craniata</taxon>
        <taxon>Vertebrata</taxon>
        <taxon>Euteleostomi</taxon>
        <taxon>Mammalia</taxon>
        <taxon>Eutheria</taxon>
        <taxon>Euarchontoglires</taxon>
        <taxon>Primates</taxon>
        <taxon>Haplorrhini</taxon>
        <taxon>Catarrhini</taxon>
        <taxon>Hominidae</taxon>
        <taxon>Homo</taxon>
    </lineage>
</organism>
<keyword id="KW-1017">Isopeptide bond</keyword>
<keyword id="KW-0539">Nucleus</keyword>
<keyword id="KW-0597">Phosphoprotein</keyword>
<keyword id="KW-1267">Proteomics identification</keyword>
<keyword id="KW-1185">Reference proteome</keyword>
<keyword id="KW-0677">Repeat</keyword>
<keyword id="KW-0832">Ubl conjugation</keyword>
<feature type="chain" id="PRO_0000058146" description="Coilin">
    <location>
        <begin position="1"/>
        <end position="576"/>
    </location>
</feature>
<feature type="repeat" description="1-1">
    <location>
        <begin position="223"/>
        <end position="226"/>
    </location>
</feature>
<feature type="repeat" description="1-2">
    <location>
        <begin position="268"/>
        <end position="271"/>
    </location>
</feature>
<feature type="repeat" description="2-1">
    <location>
        <begin position="386"/>
        <end position="389"/>
    </location>
</feature>
<feature type="repeat" description="3-1">
    <location>
        <begin position="413"/>
        <end position="414"/>
    </location>
</feature>
<feature type="repeat" description="3-2">
    <location>
        <begin position="415"/>
        <end position="416"/>
    </location>
</feature>
<feature type="repeat" description="3-3">
    <location>
        <begin position="417"/>
        <end position="418"/>
    </location>
</feature>
<feature type="repeat" description="3-4">
    <location>
        <begin position="419"/>
        <end position="420"/>
    </location>
</feature>
<feature type="domain" description="Tudor; atypical">
    <location>
        <begin position="460"/>
        <end position="559"/>
    </location>
</feature>
<feature type="repeat" description="2-2">
    <location>
        <begin position="517"/>
        <end position="520"/>
    </location>
</feature>
<feature type="region of interest" description="Disordered" evidence="2">
    <location>
        <begin position="125"/>
        <end position="330"/>
    </location>
</feature>
<feature type="region of interest" description="2 X 4 AA repeats of A-R-N-S">
    <location>
        <begin position="223"/>
        <end position="271"/>
    </location>
</feature>
<feature type="region of interest" description="Disordered" evidence="2">
    <location>
        <begin position="352"/>
        <end position="389"/>
    </location>
</feature>
<feature type="region of interest" description="2 X 4 AA repeats of S-L-P-A">
    <location>
        <begin position="386"/>
        <end position="520"/>
    </location>
</feature>
<feature type="region of interest" description="Required for interaction with SMN" evidence="3">
    <location>
        <begin position="392"/>
        <end position="420"/>
    </location>
</feature>
<feature type="region of interest" description="4 X 2 AA tandem repeats of R-G">
    <location>
        <begin position="413"/>
        <end position="420"/>
    </location>
</feature>
<feature type="compositionally biased region" description="Polar residues" evidence="2">
    <location>
        <begin position="214"/>
        <end position="225"/>
    </location>
</feature>
<feature type="compositionally biased region" description="Low complexity" evidence="2">
    <location>
        <begin position="235"/>
        <end position="250"/>
    </location>
</feature>
<feature type="compositionally biased region" description="Basic and acidic residues" evidence="2">
    <location>
        <begin position="270"/>
        <end position="285"/>
    </location>
</feature>
<feature type="compositionally biased region" description="Low complexity" evidence="2">
    <location>
        <begin position="301"/>
        <end position="320"/>
    </location>
</feature>
<feature type="modified residue" description="Phosphoserine" evidence="19">
    <location>
        <position position="105"/>
    </location>
</feature>
<feature type="modified residue" description="Phosphothreonine" evidence="16 17 19 20 21 22">
    <location>
        <position position="122"/>
    </location>
</feature>
<feature type="modified residue" description="Phosphoserine; by VRK1 and VRK2" evidence="8">
    <location>
        <position position="184"/>
    </location>
</feature>
<feature type="modified residue" description="Phosphoserine" evidence="1">
    <location>
        <position position="248"/>
    </location>
</feature>
<feature type="modified residue" description="Phosphoserine" evidence="1">
    <location>
        <position position="250"/>
    </location>
</feature>
<feature type="modified residue" description="Phosphoserine" evidence="1">
    <location>
        <position position="256"/>
    </location>
</feature>
<feature type="modified residue" description="Phosphoserine" evidence="18 19 20 21">
    <location>
        <position position="271"/>
    </location>
</feature>
<feature type="modified residue" description="Phosphoserine" evidence="19">
    <location>
        <position position="272"/>
    </location>
</feature>
<feature type="modified residue" description="Phosphothreonine" evidence="18">
    <location>
        <position position="290"/>
    </location>
</feature>
<feature type="modified residue" description="Phosphoserine" evidence="18 21">
    <location>
        <position position="301"/>
    </location>
</feature>
<feature type="modified residue" description="Phosphothreonine" evidence="18 21">
    <location>
        <position position="303"/>
    </location>
</feature>
<feature type="modified residue" description="Phosphoserine" evidence="21">
    <location>
        <position position="403"/>
    </location>
</feature>
<feature type="modified residue" description="Phosphothreonine" evidence="19 21">
    <location>
        <position position="456"/>
    </location>
</feature>
<feature type="modified residue" description="Phosphoserine" evidence="21">
    <location>
        <position position="487"/>
    </location>
</feature>
<feature type="modified residue" description="Phosphoserine" evidence="16 18 19 21">
    <location>
        <position position="489"/>
    </location>
</feature>
<feature type="modified residue" description="Phosphoserine" evidence="19 20 21">
    <location>
        <position position="566"/>
    </location>
</feature>
<feature type="cross-link" description="Glycyl lysine isopeptide (Lys-Gly) (interchain with G-Cter in SUMO2)" evidence="23 24">
    <location>
        <position position="127"/>
    </location>
</feature>
<feature type="cross-link" description="Glycyl lysine isopeptide (Lys-Gly) (interchain with G-Cter in SUMO2)" evidence="24">
    <location>
        <position position="151"/>
    </location>
</feature>
<feature type="cross-link" description="Glycyl lysine isopeptide (Lys-Gly) (interchain with G-Cter in SUMO2)" evidence="24">
    <location>
        <position position="160"/>
    </location>
</feature>
<feature type="cross-link" description="Glycyl lysine isopeptide (Lys-Gly) (interchain with G-Cter in SUMO2)" evidence="23 24">
    <location>
        <position position="204"/>
    </location>
</feature>
<feature type="cross-link" description="Glycyl lysine isopeptide (Lys-Gly) (interchain with G-Cter in SUMO2)" evidence="24">
    <location>
        <position position="209"/>
    </location>
</feature>
<feature type="cross-link" description="Glycyl lysine isopeptide (Lys-Gly) (interchain with G-Cter in SUMO2)" evidence="24">
    <location>
        <position position="274"/>
    </location>
</feature>
<feature type="cross-link" description="Glycyl lysine isopeptide (Lys-Gly) (interchain with G-Cter in SUMO2)" evidence="23 24">
    <location>
        <position position="281"/>
    </location>
</feature>
<feature type="cross-link" description="Glycyl lysine isopeptide (Lys-Gly) (interchain with G-Cter in SUMO2)" evidence="24">
    <location>
        <position position="293"/>
    </location>
</feature>
<feature type="cross-link" description="Glycyl lysine isopeptide (Lys-Gly) (interchain with G-Cter in SUMO2)" evidence="24">
    <location>
        <position position="297"/>
    </location>
</feature>
<feature type="cross-link" description="Glycyl lysine isopeptide (Lys-Gly) (interchain with G-Cter in SUMO2)" evidence="24">
    <location>
        <position position="444"/>
    </location>
</feature>
<feature type="cross-link" description="Glycyl lysine isopeptide (Lys-Gly) (interchain with G-Cter in SUMO2)" evidence="24">
    <location>
        <position position="496"/>
    </location>
</feature>
<feature type="mutagenesis site" description="Impaired interaction with SMN." evidence="3">
    <original>RGRGRGR</original>
    <variation>GGGGGGG</variation>
    <location>
        <begin position="413"/>
        <end position="419"/>
    </location>
</feature>
<gene>
    <name type="primary">COIL</name>
    <name type="synonym">CLN80</name>
</gene>
<sequence length="576" mass="62608">MAASETVRLRLQFDYPPPATPHCTAFWLLVDLNRCRVVTDLISLIRQRFGFSSGAFLGLYLEGGLLPPAESARLVRDNDCLRVKLEERGVAENSVVISNGDINLSLRKAKKRAFQLEEGEETEPDCKYSKKHWKSRENNNNNEKVLDLEPKAVTDQTVSKKNKRKNKATCGTVGDDNEEAKRKSPKKKEKCEYKKKAKNPKSPKVQAVKDWANQRCSSPKGSARNSLVKAKRKGSVSVCSKESPSSSSESESCDESISDGPSKVTLEARNSSEKLPTELSKEEPSTKNTTADKLAIKLGFSLTPSKGKTSGTTSSSSDSSAESDDQCLMSSSTPECAAGFLKTVGLFAGRGRPGPGLSSQTAGAAGWRRSGSNGGGQAPGASPSVSLPASLGRGWGREENLFSWKGAKGRGMRGRGRGRGHPVSCVVNRSTDNQRQQQLNDVVKNSSTIIQNPVETPKKDYSLLPLLAAAPQVGEKIAFKLLELTSSYSPDVSDYKEGRILSHNPETQQVDIEILSSLPALREPGKFDLVYHNENGAEVVEYAVTQESKITVFWKELIDPRLIIESPSNTSSTEPA</sequence>
<comment type="function">
    <text evidence="14">Component of nuclear coiled bodies, also known as Cajal bodies or CBs, which are involved in the modification and assembly of nucleoplasmic snRNPs.</text>
</comment>
<comment type="subunit">
    <text evidence="3 4 5 7 10 11 12">Interacts with ANKS1B (PubMed:15862129). Interacts with SMN1 (via Tudor domain) (PubMed:11641277). Interacts (via C-terminus) with AK6 (PubMed:16079131). Interacts with WRAP53/TCAB1 (PubMed:21072240). Interacts with HMBOX1 (PubMed:23685356). Interacts with PSME3; the interaction is inhibited by PSME3IP1 (PubMed:29934401). Interacts wit UBL5 (PubMed:23726919).</text>
</comment>
<comment type="interaction">
    <interactant intactId="EBI-945751">
        <id>P38432</id>
    </interactant>
    <interactant intactId="EBI-12048761">
        <id>P58397-3</id>
        <label>ADAMTS12</label>
    </interactant>
    <organismsDiffer>false</organismsDiffer>
    <experiments>3</experiments>
</comment>
<comment type="interaction">
    <interactant intactId="EBI-945751">
        <id>P38432</id>
    </interactant>
    <interactant intactId="EBI-2896123">
        <id>Q9Y3D8</id>
        <label>AK6</label>
    </interactant>
    <organismsDiffer>false</organismsDiffer>
    <experiments>5</experiments>
</comment>
<comment type="interaction">
    <interactant intactId="EBI-945751">
        <id>P38432</id>
    </interactant>
    <interactant intactId="EBI-20771343">
        <id>Q7Z6G8-1</id>
        <label>ANKS1B</label>
    </interactant>
    <organismsDiffer>false</organismsDiffer>
    <experiments>3</experiments>
</comment>
<comment type="interaction">
    <interactant intactId="EBI-945751">
        <id>P38432</id>
    </interactant>
    <interactant intactId="EBI-20771303">
        <id>Q7Z6G8-2</id>
        <label>ANKS1B</label>
    </interactant>
    <organismsDiffer>false</organismsDiffer>
    <experiments>3</experiments>
</comment>
<comment type="interaction">
    <interactant intactId="EBI-945751">
        <id>P38432</id>
    </interactant>
    <interactant intactId="EBI-2843626">
        <id>Q9P291</id>
        <label>ARMCX1</label>
    </interactant>
    <organismsDiffer>false</organismsDiffer>
    <experiments>3</experiments>
</comment>
<comment type="interaction">
    <interactant intactId="EBI-945751">
        <id>P38432</id>
    </interactant>
    <interactant intactId="EBI-930964">
        <id>P54253</id>
        <label>ATXN1</label>
    </interactant>
    <organismsDiffer>false</organismsDiffer>
    <experiments>9</experiments>
</comment>
<comment type="interaction">
    <interactant intactId="EBI-945751">
        <id>P38432</id>
    </interactant>
    <interactant intactId="EBI-930975">
        <id>P54253-1</id>
        <label>ATXN1</label>
    </interactant>
    <organismsDiffer>false</organismsDiffer>
    <experiments>6</experiments>
</comment>
<comment type="interaction">
    <interactant intactId="EBI-945751">
        <id>P38432</id>
    </interactant>
    <interactant intactId="EBI-358049">
        <id>Q13895</id>
        <label>BYSL</label>
    </interactant>
    <organismsDiffer>false</organismsDiffer>
    <experiments>11</experiments>
</comment>
<comment type="interaction">
    <interactant intactId="EBI-945751">
        <id>P38432</id>
    </interactant>
    <interactant intactId="EBI-2961725">
        <id>Q96LT7</id>
        <label>C9orf72</label>
    </interactant>
    <organismsDiffer>false</organismsDiffer>
    <experiments>3</experiments>
</comment>
<comment type="interaction">
    <interactant intactId="EBI-945751">
        <id>P38432</id>
    </interactant>
    <interactant intactId="EBI-10961624">
        <id>Q2TAC2-2</id>
        <label>CCDC57</label>
    </interactant>
    <organismsDiffer>false</organismsDiffer>
    <experiments>3</experiments>
</comment>
<comment type="interaction">
    <interactant intactId="EBI-945751">
        <id>P38432</id>
    </interactant>
    <interactant intactId="EBI-396137">
        <id>Q9UJX2</id>
        <label>CDC23</label>
    </interactant>
    <organismsDiffer>false</organismsDiffer>
    <experiments>3</experiments>
</comment>
<comment type="interaction">
    <interactant intactId="EBI-945751">
        <id>P38432</id>
    </interactant>
    <interactant intactId="EBI-739624">
        <id>Q8NHQ1</id>
        <label>CEP70</label>
    </interactant>
    <organismsDiffer>false</organismsDiffer>
    <experiments>3</experiments>
</comment>
<comment type="interaction">
    <interactant intactId="EBI-945751">
        <id>P38432</id>
    </interactant>
    <interactant intactId="EBI-945751">
        <id>P38432</id>
        <label>COIL</label>
    </interactant>
    <organismsDiffer>false</organismsDiffer>
    <experiments>3</experiments>
</comment>
<comment type="interaction">
    <interactant intactId="EBI-945751">
        <id>P38432</id>
    </interactant>
    <interactant intactId="EBI-719554">
        <id>Q9Y295</id>
        <label>DRG1</label>
    </interactant>
    <organismsDiffer>false</organismsDiffer>
    <experiments>3</experiments>
</comment>
<comment type="interaction">
    <interactant intactId="EBI-945751">
        <id>P38432</id>
    </interactant>
    <interactant intactId="EBI-2556091">
        <id>Q96EX3</id>
        <label>DYNC2I2</label>
    </interactant>
    <organismsDiffer>false</organismsDiffer>
    <experiments>3</experiments>
</comment>
<comment type="interaction">
    <interactant intactId="EBI-945751">
        <id>P38432</id>
    </interactant>
    <interactant intactId="EBI-6657662">
        <id>P61328</id>
        <label>FGF12</label>
    </interactant>
    <organismsDiffer>false</organismsDiffer>
    <experiments>3</experiments>
</comment>
<comment type="interaction">
    <interactant intactId="EBI-945751">
        <id>P38432</id>
    </interactant>
    <interactant intactId="EBI-7116203">
        <id>O75031</id>
        <label>HSF2BP</label>
    </interactant>
    <organismsDiffer>false</organismsDiffer>
    <experiments>3</experiments>
</comment>
<comment type="interaction">
    <interactant intactId="EBI-945751">
        <id>P38432</id>
    </interactant>
    <interactant intactId="EBI-710124">
        <id>O60341</id>
        <label>KDM1A</label>
    </interactant>
    <organismsDiffer>false</organismsDiffer>
    <experiments>3</experiments>
</comment>
<comment type="interaction">
    <interactant intactId="EBI-945751">
        <id>P38432</id>
    </interactant>
    <interactant intactId="EBI-739832">
        <id>Q8TBB1</id>
        <label>LNX1</label>
    </interactant>
    <organismsDiffer>false</organismsDiffer>
    <experiments>2</experiments>
</comment>
<comment type="interaction">
    <interactant intactId="EBI-945751">
        <id>P38432</id>
    </interactant>
    <interactant intactId="EBI-348259">
        <id>Q96EZ8</id>
        <label>MCRS1</label>
    </interactant>
    <organismsDiffer>false</organismsDiffer>
    <experiments>3</experiments>
</comment>
<comment type="interaction">
    <interactant intactId="EBI-945751">
        <id>P38432</id>
    </interactant>
    <interactant intactId="EBI-1048159">
        <id>P55081</id>
        <label>MFAP1</label>
    </interactant>
    <organismsDiffer>false</organismsDiffer>
    <experiments>3</experiments>
</comment>
<comment type="interaction">
    <interactant intactId="EBI-945751">
        <id>P38432</id>
    </interactant>
    <interactant intactId="EBI-7950783">
        <id>Q96JP2</id>
        <label>MYO15B</label>
    </interactant>
    <organismsDiffer>false</organismsDiffer>
    <experiments>3</experiments>
</comment>
<comment type="interaction">
    <interactant intactId="EBI-945751">
        <id>P38432</id>
    </interactant>
    <interactant intactId="EBI-725252">
        <id>Q9UMS0</id>
        <label>NFU1</label>
    </interactant>
    <organismsDiffer>false</organismsDiffer>
    <experiments>3</experiments>
</comment>
<comment type="interaction">
    <interactant intactId="EBI-945751">
        <id>P38432</id>
    </interactant>
    <interactant intactId="EBI-3920396">
        <id>Q6ZUT1</id>
        <label>NKAPD1</label>
    </interactant>
    <organismsDiffer>false</organismsDiffer>
    <experiments>3</experiments>
</comment>
<comment type="interaction">
    <interactant intactId="EBI-945751">
        <id>P38432</id>
    </interactant>
    <interactant intactId="EBI-741158">
        <id>Q96HA8</id>
        <label>NTAQ1</label>
    </interactant>
    <organismsDiffer>false</organismsDiffer>
    <experiments>3</experiments>
</comment>
<comment type="interaction">
    <interactant intactId="EBI-945751">
        <id>P38432</id>
    </interactant>
    <interactant intactId="EBI-1642831">
        <id>Q08499</id>
        <label>PDE4D</label>
    </interactant>
    <organismsDiffer>false</organismsDiffer>
    <experiments>3</experiments>
</comment>
<comment type="interaction">
    <interactant intactId="EBI-945751">
        <id>P38432</id>
    </interactant>
    <interactant intactId="EBI-9090666">
        <id>Q08499-8</id>
        <label>PDE4D</label>
    </interactant>
    <organismsDiffer>false</organismsDiffer>
    <experiments>3</experiments>
</comment>
<comment type="interaction">
    <interactant intactId="EBI-945751">
        <id>P38432</id>
    </interactant>
    <interactant intactId="EBI-751267">
        <id>Q96HC4</id>
        <label>PDLIM5</label>
    </interactant>
    <organismsDiffer>false</organismsDiffer>
    <experiments>4</experiments>
</comment>
<comment type="interaction">
    <interactant intactId="EBI-945751">
        <id>P38432</id>
    </interactant>
    <interactant intactId="EBI-79165">
        <id>Q9NRD5</id>
        <label>PICK1</label>
    </interactant>
    <organismsDiffer>false</organismsDiffer>
    <experiments>3</experiments>
</comment>
<comment type="interaction">
    <interactant intactId="EBI-945751">
        <id>P38432</id>
    </interactant>
    <interactant intactId="EBI-741582">
        <id>O60568</id>
        <label>PLOD3</label>
    </interactant>
    <organismsDiffer>false</organismsDiffer>
    <experiments>3</experiments>
</comment>
<comment type="interaction">
    <interactant intactId="EBI-945751">
        <id>P38432</id>
    </interactant>
    <interactant intactId="EBI-359527">
        <id>P62875</id>
        <label>POLR2L</label>
    </interactant>
    <organismsDiffer>false</organismsDiffer>
    <experiments>3</experiments>
</comment>
<comment type="interaction">
    <interactant intactId="EBI-945751">
        <id>P38432</id>
    </interactant>
    <interactant intactId="EBI-5452779">
        <id>Q9BUI4</id>
        <label>POLR3C</label>
    </interactant>
    <organismsDiffer>false</organismsDiffer>
    <experiments>3</experiments>
</comment>
<comment type="interaction">
    <interactant intactId="EBI-945751">
        <id>P38432</id>
    </interactant>
    <interactant intactId="EBI-355546">
        <id>P61289</id>
        <label>PSME3</label>
    </interactant>
    <organismsDiffer>false</organismsDiffer>
    <experiments>10</experiments>
</comment>
<comment type="interaction">
    <interactant intactId="EBI-945751">
        <id>P38432</id>
    </interactant>
    <interactant intactId="EBI-712344">
        <id>Q03393</id>
        <label>PTS</label>
    </interactant>
    <organismsDiffer>false</organismsDiffer>
    <experiments>3</experiments>
</comment>
<comment type="interaction">
    <interactant intactId="EBI-945751">
        <id>P38432</id>
    </interactant>
    <interactant intactId="EBI-395421">
        <id>Q16637</id>
        <label>SMN2</label>
    </interactant>
    <organismsDiffer>false</organismsDiffer>
    <experiments>4</experiments>
</comment>
<comment type="interaction">
    <interactant intactId="EBI-945751">
        <id>P38432</id>
    </interactant>
    <interactant intactId="EBI-372458">
        <id>P14678</id>
        <label>SNRPB</label>
    </interactant>
    <organismsDiffer>false</organismsDiffer>
    <experiments>2</experiments>
</comment>
<comment type="interaction">
    <interactant intactId="EBI-945751">
        <id>P38432</id>
    </interactant>
    <interactant intactId="EBI-356900">
        <id>P62306</id>
        <label>SNRPF</label>
    </interactant>
    <organismsDiffer>false</organismsDiffer>
    <experiments>7</experiments>
</comment>
<comment type="interaction">
    <interactant intactId="EBI-945751">
        <id>P38432</id>
    </interactant>
    <interactant intactId="EBI-12023934">
        <id>Q5MJ10</id>
        <label>SPANXN2</label>
    </interactant>
    <organismsDiffer>false</organismsDiffer>
    <experiments>3</experiments>
</comment>
<comment type="interaction">
    <interactant intactId="EBI-945751">
        <id>P38432</id>
    </interactant>
    <interactant intactId="EBI-593303">
        <id>P78362</id>
        <label>SRPK2</label>
    </interactant>
    <organismsDiffer>false</organismsDiffer>
    <experiments>3</experiments>
</comment>
<comment type="interaction">
    <interactant intactId="EBI-945751">
        <id>P38432</id>
    </interactant>
    <interactant intactId="EBI-1769146">
        <id>Q99986</id>
        <label>VRK1</label>
    </interactant>
    <organismsDiffer>false</organismsDiffer>
    <experiments>9</experiments>
</comment>
<comment type="interaction">
    <interactant intactId="EBI-945751">
        <id>P38432</id>
    </interactant>
    <interactant intactId="EBI-2563542">
        <id>Q9BUR4</id>
        <label>WRAP53</label>
    </interactant>
    <organismsDiffer>false</organismsDiffer>
    <experiments>4</experiments>
</comment>
<comment type="interaction">
    <interactant intactId="EBI-945751">
        <id>P38432</id>
    </interactant>
    <interactant intactId="EBI-357997">
        <id>P13010</id>
        <label>XRCC5</label>
    </interactant>
    <organismsDiffer>false</organismsDiffer>
    <experiments>6</experiments>
</comment>
<comment type="interaction">
    <interactant intactId="EBI-945751">
        <id>P38432</id>
    </interactant>
    <interactant intactId="EBI-353208">
        <id>P12956</id>
        <label>XRCC6</label>
    </interactant>
    <organismsDiffer>false</organismsDiffer>
    <experiments>3</experiments>
</comment>
<comment type="interaction">
    <interactant intactId="EBI-945751">
        <id>P38432</id>
    </interactant>
    <interactant intactId="EBI-597063">
        <id>Q8TBK6</id>
        <label>ZCCHC10</label>
    </interactant>
    <organismsDiffer>false</organismsDiffer>
    <experiments>3</experiments>
</comment>
<comment type="interaction">
    <interactant intactId="EBI-945751">
        <id>P38432</id>
    </interactant>
    <interactant intactId="EBI-11995620">
        <id>G5E9M4</id>
        <label>ZNF277</label>
    </interactant>
    <organismsDiffer>false</organismsDiffer>
    <experiments>3</experiments>
</comment>
<comment type="interaction">
    <interactant intactId="EBI-945751">
        <id>P38432</id>
    </interactant>
    <interactant intactId="EBI-10192794">
        <id>Q8WWA6</id>
        <label>ZNF277</label>
    </interactant>
    <organismsDiffer>false</organismsDiffer>
    <experiments>3</experiments>
</comment>
<comment type="subcellular location">
    <subcellularLocation>
        <location evidence="14">Nucleus</location>
    </subcellularLocation>
    <subcellularLocation>
        <location evidence="5 9 11 14">Nucleus</location>
        <location evidence="5 9 11 14">Cajal body</location>
    </subcellularLocation>
</comment>
<comment type="tissue specificity">
    <text>Found in all the cell types examined.</text>
</comment>
<comment type="domain">
    <text evidence="6">The atypical Tudor domain at the C-terminus contains two large unstructured loops, and does not bind methylated residues.</text>
</comment>
<comment type="PTM">
    <text>Symmetrical dimethylation of arginine residues within the RG repeat region enhances affinity for SMN, and thus localization of SMN complexes to CBs.</text>
</comment>
<comment type="PTM">
    <text evidence="8 13 14">Phosphorylated by VRK1 (PubMed:31527692). Phosphorylation during mitosis is associated with disassembly of CBs.</text>
</comment>
<comment type="similarity">
    <text evidence="15">Belongs to the coilin family.</text>
</comment>
<accession>P38432</accession>
<accession>B2R931</accession>